<organism>
    <name type="scientific">Glycine max</name>
    <name type="common">Soybean</name>
    <name type="synonym">Glycine hispida</name>
    <dbReference type="NCBI Taxonomy" id="3847"/>
    <lineage>
        <taxon>Eukaryota</taxon>
        <taxon>Viridiplantae</taxon>
        <taxon>Streptophyta</taxon>
        <taxon>Embryophyta</taxon>
        <taxon>Tracheophyta</taxon>
        <taxon>Spermatophyta</taxon>
        <taxon>Magnoliopsida</taxon>
        <taxon>eudicotyledons</taxon>
        <taxon>Gunneridae</taxon>
        <taxon>Pentapetalae</taxon>
        <taxon>rosids</taxon>
        <taxon>fabids</taxon>
        <taxon>Fabales</taxon>
        <taxon>Fabaceae</taxon>
        <taxon>Papilionoideae</taxon>
        <taxon>50 kb inversion clade</taxon>
        <taxon>NPAAA clade</taxon>
        <taxon>indigoferoid/millettioid clade</taxon>
        <taxon>Phaseoleae</taxon>
        <taxon>Glycine</taxon>
        <taxon>Glycine subgen. Soja</taxon>
    </lineage>
</organism>
<reference key="1">
    <citation type="journal article" date="1994" name="Proc. Natl. Acad. Sci. U.S.A.">
        <title>A phosphatidylinositol 3-kinase is induced during soybean nodule organogenesis and is associated with membrane proliferation.</title>
        <authorList>
            <person name="Hong Z."/>
            <person name="Verma D.P.S."/>
        </authorList>
    </citation>
    <scope>NUCLEOTIDE SEQUENCE [MRNA]</scope>
    <source>
        <strain>cv. Prize</strain>
        <tissue>Root nodule</tissue>
    </source>
</reference>
<evidence type="ECO:0000255" key="1">
    <source>
        <dbReference type="PROSITE-ProRule" id="PRU00269"/>
    </source>
</evidence>
<evidence type="ECO:0000255" key="2">
    <source>
        <dbReference type="PROSITE-ProRule" id="PRU00878"/>
    </source>
</evidence>
<evidence type="ECO:0000255" key="3">
    <source>
        <dbReference type="PROSITE-ProRule" id="PRU00880"/>
    </source>
</evidence>
<comment type="function">
    <text>Associated with membrane proliferation.</text>
</comment>
<comment type="catalytic activity">
    <reaction>
        <text>a 1,2-diacyl-sn-glycero-3-phospho-(1D-myo-inositol) + ATP = a 1,2-diacyl-sn-glycero-3-phospho-(1D-myo-inositol-3-phosphate) + ADP + H(+)</text>
        <dbReference type="Rhea" id="RHEA:12709"/>
        <dbReference type="ChEBI" id="CHEBI:15378"/>
        <dbReference type="ChEBI" id="CHEBI:30616"/>
        <dbReference type="ChEBI" id="CHEBI:57880"/>
        <dbReference type="ChEBI" id="CHEBI:58088"/>
        <dbReference type="ChEBI" id="CHEBI:456216"/>
        <dbReference type="EC" id="2.7.1.137"/>
    </reaction>
</comment>
<comment type="induction">
    <text>Highly expressed in young root nodules in parallel with membrane proliferation but is repressed in mature nodules.</text>
</comment>
<comment type="similarity">
    <text evidence="3">Belongs to the PI3/PI4-kinase family.</text>
</comment>
<accession>P42348</accession>
<proteinExistence type="evidence at transcript level"/>
<name>PI3K2_SOYBN</name>
<keyword id="KW-0067">ATP-binding</keyword>
<keyword id="KW-0418">Kinase</keyword>
<keyword id="KW-0547">Nucleotide-binding</keyword>
<keyword id="KW-1185">Reference proteome</keyword>
<keyword id="KW-0808">Transferase</keyword>
<sequence>MTGNEFRFFLSCDISVPVTFRVERLEGNLPLPKSPDLENNAPTDNRTTELFVECALYIDGAPFGLPMRTRLESLGPSYCWNELITLTTKYRDLTAQSQLTFTVWDLSHGEGLIGGATILLFNNKKQLKTGKQKLRLWAGKEADGTFPTSTPGKVPRHERGELERLEKLVNKYERGQIQRVDWLDRLTFKTMERIKERESLKNGSSHMYLVVDFCSFEHRVVFQESGANFLFPSPIASTNDIVVVWDPEVGKINPSEHKQLKLARSLTRGVIDRDLKPSSNERKSIQRILKYPPTRTLSGDERQLLWKFRFSLMSEKRALTKFLRCVEWSDVQEAKQALELMGKWEMIDVCDALELLSPVFESEEVRAYAVSVLERADDEELQCYLLQLVQALRFERSAKSRLSHFLIQCALRNIELASFLRWYVAVELYDPAYAKRFYCTYEILEENMMKIAAGVNGEEDGFKQWQSLVRQTELTAQLCSITREVSNVRGNTQKKIEKLRQLLSGLLSELTYFDEPIRSPLAPGVLITGIVPSESSIFKSALHPLRLTFRAANGGTCKIIFKKGDDIRQDQLVVQMVSLMDRLLKLENLDLHLTPYKVLATGQDEGMLEFIPSRSLAQILSENRSIISYLQKFHPDDHGPFGITATCLETFIKSCAGYSVITYILGIGDRHLDNLLLRNDGGLFHVDFGFILGRDPKPFPPPMKLCKEMVEAMGGAESQYYTRFKSYCCEAYHILRKSSNLILNLFYLMAGSNIPDIASDPEKGILKLQEKFRLDLDDEASIHFFQDLINESVSALFPQMVETIHRWAQYWR</sequence>
<feature type="chain" id="PRO_0000088821" description="Phosphatidylinositol 3-kinase, nodule isoform">
    <location>
        <begin position="1"/>
        <end position="812"/>
    </location>
</feature>
<feature type="domain" description="C2 PI3K-type" evidence="3">
    <location>
        <begin position="14"/>
        <end position="175"/>
    </location>
</feature>
<feature type="domain" description="PIK helical" evidence="2">
    <location>
        <begin position="272"/>
        <end position="447"/>
    </location>
</feature>
<feature type="domain" description="PI3K/PI4K catalytic" evidence="1">
    <location>
        <begin position="531"/>
        <end position="797"/>
    </location>
</feature>
<feature type="region of interest" description="G-loop" evidence="1">
    <location>
        <begin position="537"/>
        <end position="543"/>
    </location>
</feature>
<feature type="region of interest" description="Catalytic loop" evidence="1">
    <location>
        <begin position="666"/>
        <end position="674"/>
    </location>
</feature>
<feature type="region of interest" description="Activation loop" evidence="1">
    <location>
        <begin position="685"/>
        <end position="706"/>
    </location>
</feature>
<dbReference type="EC" id="2.7.1.137"/>
<dbReference type="EMBL" id="L29770">
    <property type="protein sequence ID" value="AAA64468.1"/>
    <property type="molecule type" value="mRNA"/>
</dbReference>
<dbReference type="PIR" id="T07745">
    <property type="entry name" value="T07745"/>
</dbReference>
<dbReference type="RefSeq" id="NP_001242315.1">
    <property type="nucleotide sequence ID" value="NM_001255386.1"/>
</dbReference>
<dbReference type="SMR" id="P42348"/>
<dbReference type="FunCoup" id="P42348">
    <property type="interactions" value="7096"/>
</dbReference>
<dbReference type="STRING" id="3847.P42348"/>
<dbReference type="PaxDb" id="3847-GLYMA06G10090.1"/>
<dbReference type="GeneID" id="100778348"/>
<dbReference type="KEGG" id="gmx:100778348"/>
<dbReference type="eggNOG" id="KOG0906">
    <property type="taxonomic scope" value="Eukaryota"/>
</dbReference>
<dbReference type="InParanoid" id="P42348"/>
<dbReference type="OrthoDB" id="67688at2759"/>
<dbReference type="BRENDA" id="2.7.1.137">
    <property type="organism ID" value="2483"/>
</dbReference>
<dbReference type="Proteomes" id="UP000008827">
    <property type="component" value="Unplaced"/>
</dbReference>
<dbReference type="GO" id="GO:0005737">
    <property type="term" value="C:cytoplasm"/>
    <property type="evidence" value="ECO:0000318"/>
    <property type="project" value="GO_Central"/>
</dbReference>
<dbReference type="GO" id="GO:0005768">
    <property type="term" value="C:endosome"/>
    <property type="evidence" value="ECO:0000318"/>
    <property type="project" value="GO_Central"/>
</dbReference>
<dbReference type="GO" id="GO:0016020">
    <property type="term" value="C:membrane"/>
    <property type="evidence" value="ECO:0000318"/>
    <property type="project" value="GO_Central"/>
</dbReference>
<dbReference type="GO" id="GO:0005777">
    <property type="term" value="C:peroxisome"/>
    <property type="evidence" value="ECO:0000318"/>
    <property type="project" value="GO_Central"/>
</dbReference>
<dbReference type="GO" id="GO:0000407">
    <property type="term" value="C:phagophore assembly site"/>
    <property type="evidence" value="ECO:0000318"/>
    <property type="project" value="GO_Central"/>
</dbReference>
<dbReference type="GO" id="GO:0034271">
    <property type="term" value="C:phosphatidylinositol 3-kinase complex, class III, type I"/>
    <property type="evidence" value="ECO:0000318"/>
    <property type="project" value="GO_Central"/>
</dbReference>
<dbReference type="GO" id="GO:0034272">
    <property type="term" value="C:phosphatidylinositol 3-kinase complex, class III, type II"/>
    <property type="evidence" value="ECO:0000318"/>
    <property type="project" value="GO_Central"/>
</dbReference>
<dbReference type="GO" id="GO:0016303">
    <property type="term" value="F:1-phosphatidylinositol-3-kinase activity"/>
    <property type="evidence" value="ECO:0000318"/>
    <property type="project" value="GO_Central"/>
</dbReference>
<dbReference type="GO" id="GO:0005524">
    <property type="term" value="F:ATP binding"/>
    <property type="evidence" value="ECO:0007669"/>
    <property type="project" value="UniProtKB-KW"/>
</dbReference>
<dbReference type="GO" id="GO:0000045">
    <property type="term" value="P:autophagosome assembly"/>
    <property type="evidence" value="ECO:0000318"/>
    <property type="project" value="GO_Central"/>
</dbReference>
<dbReference type="GO" id="GO:0006897">
    <property type="term" value="P:endocytosis"/>
    <property type="evidence" value="ECO:0000318"/>
    <property type="project" value="GO_Central"/>
</dbReference>
<dbReference type="GO" id="GO:0000425">
    <property type="term" value="P:pexophagy"/>
    <property type="evidence" value="ECO:0000318"/>
    <property type="project" value="GO_Central"/>
</dbReference>
<dbReference type="GO" id="GO:0036092">
    <property type="term" value="P:phosphatidylinositol-3-phosphate biosynthetic process"/>
    <property type="evidence" value="ECO:0000318"/>
    <property type="project" value="GO_Central"/>
</dbReference>
<dbReference type="GO" id="GO:0048015">
    <property type="term" value="P:phosphatidylinositol-mediated signaling"/>
    <property type="evidence" value="ECO:0000318"/>
    <property type="project" value="GO_Central"/>
</dbReference>
<dbReference type="CDD" id="cd08397">
    <property type="entry name" value="C2_PI3K_class_III"/>
    <property type="match status" value="1"/>
</dbReference>
<dbReference type="CDD" id="cd00870">
    <property type="entry name" value="PI3Ka_III"/>
    <property type="match status" value="1"/>
</dbReference>
<dbReference type="CDD" id="cd00896">
    <property type="entry name" value="PI3Kc_III"/>
    <property type="match status" value="1"/>
</dbReference>
<dbReference type="FunFam" id="3.30.1010.10:FF:000002">
    <property type="entry name" value="Phosphatidylinositol 3-kinase catalytic subunit type 3"/>
    <property type="match status" value="1"/>
</dbReference>
<dbReference type="FunFam" id="2.60.40.150:FF:000171">
    <property type="entry name" value="Phosphatidylinositol 3-kinase VPS34"/>
    <property type="match status" value="1"/>
</dbReference>
<dbReference type="FunFam" id="1.10.1070.11:FF:000014">
    <property type="entry name" value="Phosphatidylinositol 3-kinase, root isoform"/>
    <property type="match status" value="1"/>
</dbReference>
<dbReference type="FunFam" id="1.25.40.70:FF:000012">
    <property type="entry name" value="phosphatidylinositol 3-kinase, root isoform"/>
    <property type="match status" value="1"/>
</dbReference>
<dbReference type="Gene3D" id="2.60.40.150">
    <property type="entry name" value="C2 domain"/>
    <property type="match status" value="1"/>
</dbReference>
<dbReference type="Gene3D" id="1.10.1070.11">
    <property type="entry name" value="Phosphatidylinositol 3-/4-kinase, catalytic domain"/>
    <property type="match status" value="1"/>
</dbReference>
<dbReference type="Gene3D" id="3.30.1010.10">
    <property type="entry name" value="Phosphatidylinositol 3-kinase Catalytic Subunit, Chain A, domain 4"/>
    <property type="match status" value="1"/>
</dbReference>
<dbReference type="Gene3D" id="1.25.40.70">
    <property type="entry name" value="Phosphatidylinositol 3-kinase, accessory domain (PIK)"/>
    <property type="match status" value="1"/>
</dbReference>
<dbReference type="InterPro" id="IPR016024">
    <property type="entry name" value="ARM-type_fold"/>
</dbReference>
<dbReference type="InterPro" id="IPR035892">
    <property type="entry name" value="C2_domain_sf"/>
</dbReference>
<dbReference type="InterPro" id="IPR011009">
    <property type="entry name" value="Kinase-like_dom_sf"/>
</dbReference>
<dbReference type="InterPro" id="IPR011162">
    <property type="entry name" value="MHC_I/II-like_Ag-recog"/>
</dbReference>
<dbReference type="InterPro" id="IPR000403">
    <property type="entry name" value="PI3/4_kinase_cat_dom"/>
</dbReference>
<dbReference type="InterPro" id="IPR036940">
    <property type="entry name" value="PI3/4_kinase_cat_sf"/>
</dbReference>
<dbReference type="InterPro" id="IPR018936">
    <property type="entry name" value="PI3/4_kinase_CS"/>
</dbReference>
<dbReference type="InterPro" id="IPR002420">
    <property type="entry name" value="PI3K-type_C2_dom"/>
</dbReference>
<dbReference type="InterPro" id="IPR001263">
    <property type="entry name" value="PI3K_accessory_dom"/>
</dbReference>
<dbReference type="InterPro" id="IPR042236">
    <property type="entry name" value="PI3K_accessory_sf"/>
</dbReference>
<dbReference type="InterPro" id="IPR008290">
    <property type="entry name" value="PI3K_Vps34"/>
</dbReference>
<dbReference type="InterPro" id="IPR015433">
    <property type="entry name" value="PI_Kinase"/>
</dbReference>
<dbReference type="PANTHER" id="PTHR10048:SF7">
    <property type="entry name" value="PHOSPHATIDYLINOSITOL 3-KINASE CATALYTIC SUBUNIT TYPE 3"/>
    <property type="match status" value="1"/>
</dbReference>
<dbReference type="PANTHER" id="PTHR10048">
    <property type="entry name" value="PHOSPHATIDYLINOSITOL KINASE"/>
    <property type="match status" value="1"/>
</dbReference>
<dbReference type="Pfam" id="PF00454">
    <property type="entry name" value="PI3_PI4_kinase"/>
    <property type="match status" value="1"/>
</dbReference>
<dbReference type="Pfam" id="PF00792">
    <property type="entry name" value="PI3K_C2"/>
    <property type="match status" value="1"/>
</dbReference>
<dbReference type="Pfam" id="PF00613">
    <property type="entry name" value="PI3Ka"/>
    <property type="match status" value="1"/>
</dbReference>
<dbReference type="PIRSF" id="PIRSF000587">
    <property type="entry name" value="PI3K_Vps34"/>
    <property type="match status" value="1"/>
</dbReference>
<dbReference type="SMART" id="SM00142">
    <property type="entry name" value="PI3K_C2"/>
    <property type="match status" value="1"/>
</dbReference>
<dbReference type="SMART" id="SM00145">
    <property type="entry name" value="PI3Ka"/>
    <property type="match status" value="1"/>
</dbReference>
<dbReference type="SMART" id="SM00146">
    <property type="entry name" value="PI3Kc"/>
    <property type="match status" value="1"/>
</dbReference>
<dbReference type="SUPFAM" id="SSF48371">
    <property type="entry name" value="ARM repeat"/>
    <property type="match status" value="1"/>
</dbReference>
<dbReference type="SUPFAM" id="SSF49562">
    <property type="entry name" value="C2 domain (Calcium/lipid-binding domain, CaLB)"/>
    <property type="match status" value="1"/>
</dbReference>
<dbReference type="SUPFAM" id="SSF54452">
    <property type="entry name" value="MHC antigen-recognition domain"/>
    <property type="match status" value="1"/>
</dbReference>
<dbReference type="SUPFAM" id="SSF56112">
    <property type="entry name" value="Protein kinase-like (PK-like)"/>
    <property type="match status" value="1"/>
</dbReference>
<dbReference type="PROSITE" id="PS51547">
    <property type="entry name" value="C2_PI3K"/>
    <property type="match status" value="1"/>
</dbReference>
<dbReference type="PROSITE" id="PS00915">
    <property type="entry name" value="PI3_4_KINASE_1"/>
    <property type="match status" value="1"/>
</dbReference>
<dbReference type="PROSITE" id="PS00916">
    <property type="entry name" value="PI3_4_KINASE_2"/>
    <property type="match status" value="1"/>
</dbReference>
<dbReference type="PROSITE" id="PS50290">
    <property type="entry name" value="PI3_4_KINASE_3"/>
    <property type="match status" value="1"/>
</dbReference>
<dbReference type="PROSITE" id="PS51545">
    <property type="entry name" value="PIK_HELICAL"/>
    <property type="match status" value="1"/>
</dbReference>
<protein>
    <recommendedName>
        <fullName>Phosphatidylinositol 3-kinase, nodule isoform</fullName>
        <shortName>PI3-kinase</shortName>
        <shortName>PI3K</shortName>
        <shortName>PtdIns-3-kinase</shortName>
        <ecNumber>2.7.1.137</ecNumber>
    </recommendedName>
    <alternativeName>
        <fullName>SPI3K-1</fullName>
    </alternativeName>
</protein>